<protein>
    <recommendedName>
        <fullName evidence="1">UDP-N-acetylglucosamine 1-carboxyvinyltransferase</fullName>
        <ecNumber evidence="1">2.5.1.7</ecNumber>
    </recommendedName>
    <alternativeName>
        <fullName evidence="1">Enoylpyruvate transferase</fullName>
    </alternativeName>
    <alternativeName>
        <fullName evidence="1">UDP-N-acetylglucosamine enolpyruvyl transferase</fullName>
        <shortName evidence="1">EPT</shortName>
    </alternativeName>
</protein>
<accession>B4RWE6</accession>
<accession>F2GAV7</accession>
<comment type="function">
    <text evidence="1">Cell wall formation. Adds enolpyruvyl to UDP-N-acetylglucosamine.</text>
</comment>
<comment type="catalytic activity">
    <reaction evidence="1">
        <text>phosphoenolpyruvate + UDP-N-acetyl-alpha-D-glucosamine = UDP-N-acetyl-3-O-(1-carboxyvinyl)-alpha-D-glucosamine + phosphate</text>
        <dbReference type="Rhea" id="RHEA:18681"/>
        <dbReference type="ChEBI" id="CHEBI:43474"/>
        <dbReference type="ChEBI" id="CHEBI:57705"/>
        <dbReference type="ChEBI" id="CHEBI:58702"/>
        <dbReference type="ChEBI" id="CHEBI:68483"/>
        <dbReference type="EC" id="2.5.1.7"/>
    </reaction>
</comment>
<comment type="pathway">
    <text evidence="1">Cell wall biogenesis; peptidoglycan biosynthesis.</text>
</comment>
<comment type="subcellular location">
    <subcellularLocation>
        <location evidence="1">Cytoplasm</location>
    </subcellularLocation>
</comment>
<comment type="similarity">
    <text evidence="1">Belongs to the EPSP synthase family. MurA subfamily.</text>
</comment>
<proteinExistence type="inferred from homology"/>
<organism>
    <name type="scientific">Alteromonas mediterranea (strain DSM 17117 / CIP 110805 / LMG 28347 / Deep ecotype)</name>
    <dbReference type="NCBI Taxonomy" id="1774373"/>
    <lineage>
        <taxon>Bacteria</taxon>
        <taxon>Pseudomonadati</taxon>
        <taxon>Pseudomonadota</taxon>
        <taxon>Gammaproteobacteria</taxon>
        <taxon>Alteromonadales</taxon>
        <taxon>Alteromonadaceae</taxon>
        <taxon>Alteromonas/Salinimonas group</taxon>
        <taxon>Alteromonas</taxon>
    </lineage>
</organism>
<feature type="chain" id="PRO_1000094670" description="UDP-N-acetylglucosamine 1-carboxyvinyltransferase">
    <location>
        <begin position="1"/>
        <end position="420"/>
    </location>
</feature>
<feature type="active site" description="Proton donor" evidence="1">
    <location>
        <position position="117"/>
    </location>
</feature>
<feature type="binding site" evidence="1">
    <location>
        <begin position="22"/>
        <end position="23"/>
    </location>
    <ligand>
        <name>phosphoenolpyruvate</name>
        <dbReference type="ChEBI" id="CHEBI:58702"/>
    </ligand>
</feature>
<feature type="binding site" evidence="1">
    <location>
        <position position="93"/>
    </location>
    <ligand>
        <name>UDP-N-acetyl-alpha-D-glucosamine</name>
        <dbReference type="ChEBI" id="CHEBI:57705"/>
    </ligand>
</feature>
<feature type="binding site" evidence="1">
    <location>
        <position position="307"/>
    </location>
    <ligand>
        <name>UDP-N-acetyl-alpha-D-glucosamine</name>
        <dbReference type="ChEBI" id="CHEBI:57705"/>
    </ligand>
</feature>
<feature type="binding site" evidence="1">
    <location>
        <position position="329"/>
    </location>
    <ligand>
        <name>UDP-N-acetyl-alpha-D-glucosamine</name>
        <dbReference type="ChEBI" id="CHEBI:57705"/>
    </ligand>
</feature>
<feature type="modified residue" description="2-(S-cysteinyl)pyruvic acid O-phosphothioketal" evidence="1">
    <location>
        <position position="117"/>
    </location>
</feature>
<evidence type="ECO:0000255" key="1">
    <source>
        <dbReference type="HAMAP-Rule" id="MF_00111"/>
    </source>
</evidence>
<gene>
    <name evidence="1" type="primary">murA</name>
    <name type="ordered locus">MADE_1004250</name>
</gene>
<sequence>MDKLVIKKGSALNGTVRISGAKNAALPLLMTSLLTDSPCRYTNVPRLRDINTTTALLRELGVEVALPAPNDIVIDASTLESVTASYDLVRTMRASILVLGPLLAKQGKANVSLPGGCAIGARPVNLHLTGLEKMGAKIEVDEGYIRAKVDGRLKGARIFMDMVSVGATENLLMAAALADGTTILENAAREPEIVDLANCLIQMGAKISGAGSDKITIEGVETLNGCDYAVLPDRIETGTFLVAAAVTGGKVRCTNAAPDTLDAVLDKLEQAGAKITTGEDWIELDMEGRKPQAVRVKTAPHPAFPTDMQAQFVTLNCVAEGTGVITETIFENRFMHVPELQRMGAEIALEANSAVSKGSSSLKGAPVMATDLRASASLVIAGLIAEGETHVNRIYHLDRGYEAIEEKLGGLGAIIERVKE</sequence>
<dbReference type="EC" id="2.5.1.7" evidence="1"/>
<dbReference type="EMBL" id="CP001103">
    <property type="protein sequence ID" value="AEA96998.1"/>
    <property type="molecule type" value="Genomic_DNA"/>
</dbReference>
<dbReference type="RefSeq" id="WP_012517352.1">
    <property type="nucleotide sequence ID" value="NC_011138.3"/>
</dbReference>
<dbReference type="SMR" id="B4RWE6"/>
<dbReference type="KEGG" id="amc:MADE_1004250"/>
<dbReference type="HOGENOM" id="CLU_027387_0_0_6"/>
<dbReference type="UniPathway" id="UPA00219"/>
<dbReference type="Proteomes" id="UP000001870">
    <property type="component" value="Chromosome"/>
</dbReference>
<dbReference type="GO" id="GO:0005737">
    <property type="term" value="C:cytoplasm"/>
    <property type="evidence" value="ECO:0007669"/>
    <property type="project" value="UniProtKB-SubCell"/>
</dbReference>
<dbReference type="GO" id="GO:0008760">
    <property type="term" value="F:UDP-N-acetylglucosamine 1-carboxyvinyltransferase activity"/>
    <property type="evidence" value="ECO:0007669"/>
    <property type="project" value="UniProtKB-UniRule"/>
</dbReference>
<dbReference type="GO" id="GO:0051301">
    <property type="term" value="P:cell division"/>
    <property type="evidence" value="ECO:0007669"/>
    <property type="project" value="UniProtKB-KW"/>
</dbReference>
<dbReference type="GO" id="GO:0071555">
    <property type="term" value="P:cell wall organization"/>
    <property type="evidence" value="ECO:0007669"/>
    <property type="project" value="UniProtKB-KW"/>
</dbReference>
<dbReference type="GO" id="GO:0009252">
    <property type="term" value="P:peptidoglycan biosynthetic process"/>
    <property type="evidence" value="ECO:0007669"/>
    <property type="project" value="UniProtKB-UniRule"/>
</dbReference>
<dbReference type="GO" id="GO:0008360">
    <property type="term" value="P:regulation of cell shape"/>
    <property type="evidence" value="ECO:0007669"/>
    <property type="project" value="UniProtKB-KW"/>
</dbReference>
<dbReference type="GO" id="GO:0019277">
    <property type="term" value="P:UDP-N-acetylgalactosamine biosynthetic process"/>
    <property type="evidence" value="ECO:0007669"/>
    <property type="project" value="InterPro"/>
</dbReference>
<dbReference type="CDD" id="cd01555">
    <property type="entry name" value="UdpNAET"/>
    <property type="match status" value="1"/>
</dbReference>
<dbReference type="FunFam" id="3.65.10.10:FF:000002">
    <property type="entry name" value="UDP-N-acetylglucosamine 1-carboxyvinyltransferase"/>
    <property type="match status" value="1"/>
</dbReference>
<dbReference type="Gene3D" id="3.65.10.10">
    <property type="entry name" value="Enolpyruvate transferase domain"/>
    <property type="match status" value="2"/>
</dbReference>
<dbReference type="HAMAP" id="MF_00111">
    <property type="entry name" value="MurA"/>
    <property type="match status" value="1"/>
</dbReference>
<dbReference type="InterPro" id="IPR001986">
    <property type="entry name" value="Enolpyruvate_Tfrase_dom"/>
</dbReference>
<dbReference type="InterPro" id="IPR036968">
    <property type="entry name" value="Enolpyruvate_Tfrase_sf"/>
</dbReference>
<dbReference type="InterPro" id="IPR050068">
    <property type="entry name" value="MurA_subfamily"/>
</dbReference>
<dbReference type="InterPro" id="IPR013792">
    <property type="entry name" value="RNA3'P_cycl/enolpyr_Trfase_a/b"/>
</dbReference>
<dbReference type="InterPro" id="IPR005750">
    <property type="entry name" value="UDP_GlcNAc_COvinyl_MurA"/>
</dbReference>
<dbReference type="NCBIfam" id="TIGR01072">
    <property type="entry name" value="murA"/>
    <property type="match status" value="1"/>
</dbReference>
<dbReference type="NCBIfam" id="NF006873">
    <property type="entry name" value="PRK09369.1"/>
    <property type="match status" value="1"/>
</dbReference>
<dbReference type="PANTHER" id="PTHR43783">
    <property type="entry name" value="UDP-N-ACETYLGLUCOSAMINE 1-CARBOXYVINYLTRANSFERASE"/>
    <property type="match status" value="1"/>
</dbReference>
<dbReference type="PANTHER" id="PTHR43783:SF1">
    <property type="entry name" value="UDP-N-ACETYLGLUCOSAMINE 1-CARBOXYVINYLTRANSFERASE"/>
    <property type="match status" value="1"/>
</dbReference>
<dbReference type="Pfam" id="PF00275">
    <property type="entry name" value="EPSP_synthase"/>
    <property type="match status" value="1"/>
</dbReference>
<dbReference type="SUPFAM" id="SSF55205">
    <property type="entry name" value="EPT/RTPC-like"/>
    <property type="match status" value="1"/>
</dbReference>
<keyword id="KW-0131">Cell cycle</keyword>
<keyword id="KW-0132">Cell division</keyword>
<keyword id="KW-0133">Cell shape</keyword>
<keyword id="KW-0961">Cell wall biogenesis/degradation</keyword>
<keyword id="KW-0963">Cytoplasm</keyword>
<keyword id="KW-0573">Peptidoglycan synthesis</keyword>
<keyword id="KW-0670">Pyruvate</keyword>
<keyword id="KW-0808">Transferase</keyword>
<name>MURA_ALTMD</name>
<reference key="1">
    <citation type="journal article" date="2008" name="ISME J.">
        <title>Comparative genomics of two ecotypes of the marine planktonic copiotroph Alteromonas macleodii suggests alternative lifestyles associated with different kinds of particulate organic matter.</title>
        <authorList>
            <person name="Ivars-Martinez E."/>
            <person name="Martin-Cuadrado A.-B."/>
            <person name="D'Auria G."/>
            <person name="Mira A."/>
            <person name="Ferriera S."/>
            <person name="Johnson J."/>
            <person name="Friedman R."/>
            <person name="Rodriguez-Valera F."/>
        </authorList>
    </citation>
    <scope>NUCLEOTIDE SEQUENCE [LARGE SCALE GENOMIC DNA]</scope>
    <source>
        <strain>DSM 17117 / CIP 110805 / LMG 28347 / Deep ecotype</strain>
    </source>
</reference>